<reference key="1">
    <citation type="journal article" date="1997" name="Proc. Natl. Acad. Sci. U.S.A.">
        <title>Sequence of a 189-kb segment of the chromosome of Rhodobacter capsulatus SB1003.</title>
        <authorList>
            <person name="Vlcek C."/>
            <person name="Paces V."/>
            <person name="Maltsev N."/>
            <person name="Paces J."/>
            <person name="Haselkorn R."/>
            <person name="Fonstein M."/>
        </authorList>
    </citation>
    <scope>NUCLEOTIDE SEQUENCE [GENOMIC DNA]</scope>
    <source>
        <strain>ATCC BAA-309 / NBRC 16581 / SB1003</strain>
    </source>
</reference>
<reference key="2">
    <citation type="journal article" date="2010" name="J. Bacteriol.">
        <title>Complete genome sequence of the photosynthetic purple nonsulfur bacterium Rhodobacter capsulatus SB 1003.</title>
        <authorList>
            <person name="Strnad H."/>
            <person name="Lapidus A."/>
            <person name="Paces J."/>
            <person name="Ulbrich P."/>
            <person name="Vlcek C."/>
            <person name="Paces V."/>
            <person name="Haselkorn R."/>
        </authorList>
    </citation>
    <scope>NUCLEOTIDE SEQUENCE [LARGE SCALE GENOMIC DNA]</scope>
    <source>
        <strain>ATCC BAA-309 / NBRC 16581 / SB1003</strain>
    </source>
</reference>
<protein>
    <recommendedName>
        <fullName evidence="1">Bifunctional protein FolD</fullName>
    </recommendedName>
    <domain>
        <recommendedName>
            <fullName evidence="1">Methylenetetrahydrofolate dehydrogenase</fullName>
            <ecNumber evidence="1">1.5.1.5</ecNumber>
        </recommendedName>
    </domain>
    <domain>
        <recommendedName>
            <fullName evidence="1">Methenyltetrahydrofolate cyclohydrolase</fullName>
            <ecNumber evidence="1">3.5.4.9</ecNumber>
        </recommendedName>
    </domain>
</protein>
<keyword id="KW-0028">Amino-acid biosynthesis</keyword>
<keyword id="KW-0368">Histidine biosynthesis</keyword>
<keyword id="KW-0378">Hydrolase</keyword>
<keyword id="KW-0486">Methionine biosynthesis</keyword>
<keyword id="KW-0511">Multifunctional enzyme</keyword>
<keyword id="KW-0521">NADP</keyword>
<keyword id="KW-0554">One-carbon metabolism</keyword>
<keyword id="KW-0560">Oxidoreductase</keyword>
<keyword id="KW-0658">Purine biosynthesis</keyword>
<keyword id="KW-1185">Reference proteome</keyword>
<feature type="chain" id="PRO_0000268468" description="Bifunctional protein FolD">
    <location>
        <begin position="1"/>
        <end position="300"/>
    </location>
</feature>
<feature type="binding site" evidence="1">
    <location>
        <begin position="169"/>
        <end position="171"/>
    </location>
    <ligand>
        <name>NADP(+)</name>
        <dbReference type="ChEBI" id="CHEBI:58349"/>
    </ligand>
</feature>
<feature type="binding site" evidence="1">
    <location>
        <position position="235"/>
    </location>
    <ligand>
        <name>NADP(+)</name>
        <dbReference type="ChEBI" id="CHEBI:58349"/>
    </ligand>
</feature>
<sequence>MADRRDHRIIDGKAVQQRLLAGIRAELEAAAETHPVGRLVSISIGPSPEIEVYVRNQARAAATAGLPFEQVVWEASATQEACKRKIAALNDDPSVLGIILQRPVPAHIHVRSLQSAIHPLKDVEGMNPASIGNIVYNDIALAPCTAAAAVEMVRATGLPLPGLEVVMIGHSEIVGKPVAFLLMAEGATVTVCHHMTRSVAMHSRRADVVIVAVGKAHLIGPEMIKPGAAVIDIGINQVTDAAGKVRILGDVDTEAVREVAGWITPVPGGVGPVTVAMLMRNALTAHRRQVAAGWLEAAKA</sequence>
<comment type="function">
    <text evidence="1">Catalyzes the oxidation of 5,10-methylenetetrahydrofolate to 5,10-methenyltetrahydrofolate and then the hydrolysis of 5,10-methenyltetrahydrofolate to 10-formyltetrahydrofolate.</text>
</comment>
<comment type="catalytic activity">
    <reaction evidence="1">
        <text>(6R)-5,10-methylene-5,6,7,8-tetrahydrofolate + NADP(+) = (6R)-5,10-methenyltetrahydrofolate + NADPH</text>
        <dbReference type="Rhea" id="RHEA:22812"/>
        <dbReference type="ChEBI" id="CHEBI:15636"/>
        <dbReference type="ChEBI" id="CHEBI:57455"/>
        <dbReference type="ChEBI" id="CHEBI:57783"/>
        <dbReference type="ChEBI" id="CHEBI:58349"/>
        <dbReference type="EC" id="1.5.1.5"/>
    </reaction>
</comment>
<comment type="catalytic activity">
    <reaction evidence="1">
        <text>(6R)-5,10-methenyltetrahydrofolate + H2O = (6R)-10-formyltetrahydrofolate + H(+)</text>
        <dbReference type="Rhea" id="RHEA:23700"/>
        <dbReference type="ChEBI" id="CHEBI:15377"/>
        <dbReference type="ChEBI" id="CHEBI:15378"/>
        <dbReference type="ChEBI" id="CHEBI:57455"/>
        <dbReference type="ChEBI" id="CHEBI:195366"/>
        <dbReference type="EC" id="3.5.4.9"/>
    </reaction>
</comment>
<comment type="pathway">
    <text evidence="1">One-carbon metabolism; tetrahydrofolate interconversion.</text>
</comment>
<comment type="subunit">
    <text evidence="1">Homodimer.</text>
</comment>
<comment type="similarity">
    <text evidence="1">Belongs to the tetrahydrofolate dehydrogenase/cyclohydrolase family.</text>
</comment>
<proteinExistence type="inferred from homology"/>
<organism>
    <name type="scientific">Rhodobacter capsulatus (strain ATCC BAA-309 / NBRC 16581 / SB1003)</name>
    <dbReference type="NCBI Taxonomy" id="272942"/>
    <lineage>
        <taxon>Bacteria</taxon>
        <taxon>Pseudomonadati</taxon>
        <taxon>Pseudomonadota</taxon>
        <taxon>Alphaproteobacteria</taxon>
        <taxon>Rhodobacterales</taxon>
        <taxon>Rhodobacter group</taxon>
        <taxon>Rhodobacter</taxon>
    </lineage>
</organism>
<name>FOLD_RHOCB</name>
<gene>
    <name evidence="1" type="primary">folD</name>
    <name type="ordered locus">RCAP_rcc02135</name>
</gene>
<evidence type="ECO:0000255" key="1">
    <source>
        <dbReference type="HAMAP-Rule" id="MF_01576"/>
    </source>
</evidence>
<accession>O68031</accession>
<accession>D5AV83</accession>
<dbReference type="EC" id="1.5.1.5" evidence="1"/>
<dbReference type="EC" id="3.5.4.9" evidence="1"/>
<dbReference type="EMBL" id="AF010496">
    <property type="protein sequence ID" value="AAC16117.1"/>
    <property type="molecule type" value="Genomic_DNA"/>
</dbReference>
<dbReference type="EMBL" id="CP001312">
    <property type="protein sequence ID" value="ADE85865.1"/>
    <property type="molecule type" value="Genomic_DNA"/>
</dbReference>
<dbReference type="PIR" id="T03464">
    <property type="entry name" value="T03464"/>
</dbReference>
<dbReference type="RefSeq" id="WP_013067844.1">
    <property type="nucleotide sequence ID" value="NC_014034.1"/>
</dbReference>
<dbReference type="SMR" id="O68031"/>
<dbReference type="STRING" id="272942.RCAP_rcc02135"/>
<dbReference type="GeneID" id="31490986"/>
<dbReference type="KEGG" id="rcp:RCAP_rcc02135"/>
<dbReference type="eggNOG" id="COG0190">
    <property type="taxonomic scope" value="Bacteria"/>
</dbReference>
<dbReference type="HOGENOM" id="CLU_034045_2_1_5"/>
<dbReference type="OrthoDB" id="9803580at2"/>
<dbReference type="UniPathway" id="UPA00193"/>
<dbReference type="Proteomes" id="UP000002361">
    <property type="component" value="Chromosome"/>
</dbReference>
<dbReference type="GO" id="GO:0005829">
    <property type="term" value="C:cytosol"/>
    <property type="evidence" value="ECO:0007669"/>
    <property type="project" value="TreeGrafter"/>
</dbReference>
<dbReference type="GO" id="GO:0004477">
    <property type="term" value="F:methenyltetrahydrofolate cyclohydrolase activity"/>
    <property type="evidence" value="ECO:0007669"/>
    <property type="project" value="UniProtKB-UniRule"/>
</dbReference>
<dbReference type="GO" id="GO:0004488">
    <property type="term" value="F:methylenetetrahydrofolate dehydrogenase (NADP+) activity"/>
    <property type="evidence" value="ECO:0007669"/>
    <property type="project" value="UniProtKB-UniRule"/>
</dbReference>
<dbReference type="GO" id="GO:0000105">
    <property type="term" value="P:L-histidine biosynthetic process"/>
    <property type="evidence" value="ECO:0007669"/>
    <property type="project" value="UniProtKB-KW"/>
</dbReference>
<dbReference type="GO" id="GO:0009086">
    <property type="term" value="P:methionine biosynthetic process"/>
    <property type="evidence" value="ECO:0007669"/>
    <property type="project" value="UniProtKB-KW"/>
</dbReference>
<dbReference type="GO" id="GO:0006164">
    <property type="term" value="P:purine nucleotide biosynthetic process"/>
    <property type="evidence" value="ECO:0007669"/>
    <property type="project" value="UniProtKB-KW"/>
</dbReference>
<dbReference type="GO" id="GO:0035999">
    <property type="term" value="P:tetrahydrofolate interconversion"/>
    <property type="evidence" value="ECO:0007669"/>
    <property type="project" value="UniProtKB-UniRule"/>
</dbReference>
<dbReference type="CDD" id="cd01080">
    <property type="entry name" value="NAD_bind_m-THF_DH_Cyclohyd"/>
    <property type="match status" value="1"/>
</dbReference>
<dbReference type="FunFam" id="3.40.50.720:FF:000006">
    <property type="entry name" value="Bifunctional protein FolD"/>
    <property type="match status" value="1"/>
</dbReference>
<dbReference type="Gene3D" id="3.40.50.10860">
    <property type="entry name" value="Leucine Dehydrogenase, chain A, domain 1"/>
    <property type="match status" value="1"/>
</dbReference>
<dbReference type="Gene3D" id="3.40.50.720">
    <property type="entry name" value="NAD(P)-binding Rossmann-like Domain"/>
    <property type="match status" value="1"/>
</dbReference>
<dbReference type="HAMAP" id="MF_01576">
    <property type="entry name" value="THF_DHG_CYH"/>
    <property type="match status" value="1"/>
</dbReference>
<dbReference type="InterPro" id="IPR046346">
    <property type="entry name" value="Aminoacid_DH-like_N_sf"/>
</dbReference>
<dbReference type="InterPro" id="IPR036291">
    <property type="entry name" value="NAD(P)-bd_dom_sf"/>
</dbReference>
<dbReference type="InterPro" id="IPR000672">
    <property type="entry name" value="THF_DH/CycHdrlase"/>
</dbReference>
<dbReference type="InterPro" id="IPR020630">
    <property type="entry name" value="THF_DH/CycHdrlase_cat_dom"/>
</dbReference>
<dbReference type="InterPro" id="IPR020631">
    <property type="entry name" value="THF_DH/CycHdrlase_NAD-bd_dom"/>
</dbReference>
<dbReference type="PANTHER" id="PTHR48099:SF5">
    <property type="entry name" value="C-1-TETRAHYDROFOLATE SYNTHASE, CYTOPLASMIC"/>
    <property type="match status" value="1"/>
</dbReference>
<dbReference type="PANTHER" id="PTHR48099">
    <property type="entry name" value="C-1-TETRAHYDROFOLATE SYNTHASE, CYTOPLASMIC-RELATED"/>
    <property type="match status" value="1"/>
</dbReference>
<dbReference type="Pfam" id="PF00763">
    <property type="entry name" value="THF_DHG_CYH"/>
    <property type="match status" value="1"/>
</dbReference>
<dbReference type="Pfam" id="PF02882">
    <property type="entry name" value="THF_DHG_CYH_C"/>
    <property type="match status" value="1"/>
</dbReference>
<dbReference type="PRINTS" id="PR00085">
    <property type="entry name" value="THFDHDRGNASE"/>
</dbReference>
<dbReference type="SUPFAM" id="SSF53223">
    <property type="entry name" value="Aminoacid dehydrogenase-like, N-terminal domain"/>
    <property type="match status" value="1"/>
</dbReference>
<dbReference type="SUPFAM" id="SSF51735">
    <property type="entry name" value="NAD(P)-binding Rossmann-fold domains"/>
    <property type="match status" value="1"/>
</dbReference>